<dbReference type="EMBL" id="AB005554">
    <property type="protein sequence ID" value="BAA21590.1"/>
    <property type="status" value="ALT_FRAME"/>
    <property type="molecule type" value="Genomic_DNA"/>
</dbReference>
<dbReference type="EMBL" id="AB005554">
    <property type="protein sequence ID" value="BAA21591.1"/>
    <property type="status" value="ALT_FRAME"/>
    <property type="molecule type" value="Genomic_DNA"/>
</dbReference>
<dbReference type="EMBL" id="AL009126">
    <property type="protein sequence ID" value="CAB16030.2"/>
    <property type="molecule type" value="Genomic_DNA"/>
</dbReference>
<dbReference type="PIR" id="B70072">
    <property type="entry name" value="B70072"/>
</dbReference>
<dbReference type="PIR" id="C70072">
    <property type="entry name" value="C70072"/>
</dbReference>
<dbReference type="RefSeq" id="NP_391873.2">
    <property type="nucleotide sequence ID" value="NC_000964.3"/>
</dbReference>
<dbReference type="RefSeq" id="WP_003243209.1">
    <property type="nucleotide sequence ID" value="NZ_OZ025638.1"/>
</dbReference>
<dbReference type="SMR" id="P42111"/>
<dbReference type="FunCoup" id="P42111">
    <property type="interactions" value="19"/>
</dbReference>
<dbReference type="IntAct" id="P42111">
    <property type="interactions" value="10"/>
</dbReference>
<dbReference type="STRING" id="224308.BSU39940"/>
<dbReference type="PaxDb" id="224308-BSU39940"/>
<dbReference type="DNASU" id="937661"/>
<dbReference type="EnsemblBacteria" id="CAB16030">
    <property type="protein sequence ID" value="CAB16030"/>
    <property type="gene ID" value="BSU_39940"/>
</dbReference>
<dbReference type="GeneID" id="937661"/>
<dbReference type="KEGG" id="bsu:BSU39940"/>
<dbReference type="PATRIC" id="fig|224308.179.peg.4320"/>
<dbReference type="eggNOG" id="COG1520">
    <property type="taxonomic scope" value="Bacteria"/>
</dbReference>
<dbReference type="InParanoid" id="P42111"/>
<dbReference type="OrthoDB" id="1858867at2"/>
<dbReference type="PhylomeDB" id="P42111"/>
<dbReference type="BioCyc" id="BSUB:BSU39940-MONOMER"/>
<dbReference type="Proteomes" id="UP000001570">
    <property type="component" value="Chromosome"/>
</dbReference>
<dbReference type="GO" id="GO:0005576">
    <property type="term" value="C:extracellular region"/>
    <property type="evidence" value="ECO:0007669"/>
    <property type="project" value="UniProtKB-SubCell"/>
</dbReference>
<dbReference type="Gene3D" id="2.40.10.480">
    <property type="match status" value="1"/>
</dbReference>
<dbReference type="Gene3D" id="2.130.10.10">
    <property type="entry name" value="YVTN repeat-like/Quinoprotein amine dehydrogenase"/>
    <property type="match status" value="2"/>
</dbReference>
<dbReference type="InterPro" id="IPR018391">
    <property type="entry name" value="PQQ_b-propeller_rpt"/>
</dbReference>
<dbReference type="InterPro" id="IPR002372">
    <property type="entry name" value="PQQ_rpt_dom"/>
</dbReference>
<dbReference type="InterPro" id="IPR011047">
    <property type="entry name" value="Quinoprotein_ADH-like_sf"/>
</dbReference>
<dbReference type="InterPro" id="IPR015943">
    <property type="entry name" value="WD40/YVTN_repeat-like_dom_sf"/>
</dbReference>
<dbReference type="PANTHER" id="PTHR34512">
    <property type="entry name" value="CELL SURFACE PROTEIN"/>
    <property type="match status" value="1"/>
</dbReference>
<dbReference type="PANTHER" id="PTHR34512:SF30">
    <property type="entry name" value="OUTER MEMBRANE PROTEIN ASSEMBLY FACTOR BAMB"/>
    <property type="match status" value="1"/>
</dbReference>
<dbReference type="Pfam" id="PF13360">
    <property type="entry name" value="PQQ_2"/>
    <property type="match status" value="1"/>
</dbReference>
<dbReference type="SMART" id="SM00564">
    <property type="entry name" value="PQQ"/>
    <property type="match status" value="7"/>
</dbReference>
<dbReference type="SUPFAM" id="SSF50998">
    <property type="entry name" value="Quinoprotein alcohol dehydrogenase-like"/>
    <property type="match status" value="2"/>
</dbReference>
<evidence type="ECO:0000269" key="1">
    <source>
    </source>
</evidence>
<evidence type="ECO:0000269" key="2">
    <source>
    </source>
</evidence>
<evidence type="ECO:0000305" key="3"/>
<proteinExistence type="evidence at protein level"/>
<organism>
    <name type="scientific">Bacillus subtilis (strain 168)</name>
    <dbReference type="NCBI Taxonomy" id="224308"/>
    <lineage>
        <taxon>Bacteria</taxon>
        <taxon>Bacillati</taxon>
        <taxon>Bacillota</taxon>
        <taxon>Bacilli</taxon>
        <taxon>Bacillales</taxon>
        <taxon>Bacillaceae</taxon>
        <taxon>Bacillus</taxon>
    </lineage>
</organism>
<reference key="1">
    <citation type="journal article" date="1995" name="DNA Res.">
        <title>Cloning and sequencing of a 36-kb region of the Bacillus subtilis genome between the gnt and iol operons.</title>
        <authorList>
            <person name="Yoshida K."/>
            <person name="Seki S."/>
            <person name="Fujimura M."/>
            <person name="Miwa Y."/>
            <person name="Fujita Y."/>
        </authorList>
    </citation>
    <scope>NUCLEOTIDE SEQUENCE [GENOMIC DNA]</scope>
    <source>
        <strain>168 / BGSC1A1</strain>
    </source>
</reference>
<reference key="2">
    <citation type="journal article" date="1997" name="Nature">
        <title>The complete genome sequence of the Gram-positive bacterium Bacillus subtilis.</title>
        <authorList>
            <person name="Kunst F."/>
            <person name="Ogasawara N."/>
            <person name="Moszer I."/>
            <person name="Albertini A.M."/>
            <person name="Alloni G."/>
            <person name="Azevedo V."/>
            <person name="Bertero M.G."/>
            <person name="Bessieres P."/>
            <person name="Bolotin A."/>
            <person name="Borchert S."/>
            <person name="Borriss R."/>
            <person name="Boursier L."/>
            <person name="Brans A."/>
            <person name="Braun M."/>
            <person name="Brignell S.C."/>
            <person name="Bron S."/>
            <person name="Brouillet S."/>
            <person name="Bruschi C.V."/>
            <person name="Caldwell B."/>
            <person name="Capuano V."/>
            <person name="Carter N.M."/>
            <person name="Choi S.-K."/>
            <person name="Codani J.-J."/>
            <person name="Connerton I.F."/>
            <person name="Cummings N.J."/>
            <person name="Daniel R.A."/>
            <person name="Denizot F."/>
            <person name="Devine K.M."/>
            <person name="Duesterhoeft A."/>
            <person name="Ehrlich S.D."/>
            <person name="Emmerson P.T."/>
            <person name="Entian K.-D."/>
            <person name="Errington J."/>
            <person name="Fabret C."/>
            <person name="Ferrari E."/>
            <person name="Foulger D."/>
            <person name="Fritz C."/>
            <person name="Fujita M."/>
            <person name="Fujita Y."/>
            <person name="Fuma S."/>
            <person name="Galizzi A."/>
            <person name="Galleron N."/>
            <person name="Ghim S.-Y."/>
            <person name="Glaser P."/>
            <person name="Goffeau A."/>
            <person name="Golightly E.J."/>
            <person name="Grandi G."/>
            <person name="Guiseppi G."/>
            <person name="Guy B.J."/>
            <person name="Haga K."/>
            <person name="Haiech J."/>
            <person name="Harwood C.R."/>
            <person name="Henaut A."/>
            <person name="Hilbert H."/>
            <person name="Holsappel S."/>
            <person name="Hosono S."/>
            <person name="Hullo M.-F."/>
            <person name="Itaya M."/>
            <person name="Jones L.-M."/>
            <person name="Joris B."/>
            <person name="Karamata D."/>
            <person name="Kasahara Y."/>
            <person name="Klaerr-Blanchard M."/>
            <person name="Klein C."/>
            <person name="Kobayashi Y."/>
            <person name="Koetter P."/>
            <person name="Koningstein G."/>
            <person name="Krogh S."/>
            <person name="Kumano M."/>
            <person name="Kurita K."/>
            <person name="Lapidus A."/>
            <person name="Lardinois S."/>
            <person name="Lauber J."/>
            <person name="Lazarevic V."/>
            <person name="Lee S.-M."/>
            <person name="Levine A."/>
            <person name="Liu H."/>
            <person name="Masuda S."/>
            <person name="Mauel C."/>
            <person name="Medigue C."/>
            <person name="Medina N."/>
            <person name="Mellado R.P."/>
            <person name="Mizuno M."/>
            <person name="Moestl D."/>
            <person name="Nakai S."/>
            <person name="Noback M."/>
            <person name="Noone D."/>
            <person name="O'Reilly M."/>
            <person name="Ogawa K."/>
            <person name="Ogiwara A."/>
            <person name="Oudega B."/>
            <person name="Park S.-H."/>
            <person name="Parro V."/>
            <person name="Pohl T.M."/>
            <person name="Portetelle D."/>
            <person name="Porwollik S."/>
            <person name="Prescott A.M."/>
            <person name="Presecan E."/>
            <person name="Pujic P."/>
            <person name="Purnelle B."/>
            <person name="Rapoport G."/>
            <person name="Rey M."/>
            <person name="Reynolds S."/>
            <person name="Rieger M."/>
            <person name="Rivolta C."/>
            <person name="Rocha E."/>
            <person name="Roche B."/>
            <person name="Rose M."/>
            <person name="Sadaie Y."/>
            <person name="Sato T."/>
            <person name="Scanlan E."/>
            <person name="Schleich S."/>
            <person name="Schroeter R."/>
            <person name="Scoffone F."/>
            <person name="Sekiguchi J."/>
            <person name="Sekowska A."/>
            <person name="Seror S.J."/>
            <person name="Serror P."/>
            <person name="Shin B.-S."/>
            <person name="Soldo B."/>
            <person name="Sorokin A."/>
            <person name="Tacconi E."/>
            <person name="Takagi T."/>
            <person name="Takahashi H."/>
            <person name="Takemaru K."/>
            <person name="Takeuchi M."/>
            <person name="Tamakoshi A."/>
            <person name="Tanaka T."/>
            <person name="Terpstra P."/>
            <person name="Tognoni A."/>
            <person name="Tosato V."/>
            <person name="Uchiyama S."/>
            <person name="Vandenbol M."/>
            <person name="Vannier F."/>
            <person name="Vassarotti A."/>
            <person name="Viari A."/>
            <person name="Wambutt R."/>
            <person name="Wedler E."/>
            <person name="Wedler H."/>
            <person name="Weitzenegger T."/>
            <person name="Winters P."/>
            <person name="Wipat A."/>
            <person name="Yamamoto H."/>
            <person name="Yamane K."/>
            <person name="Yasumoto K."/>
            <person name="Yata K."/>
            <person name="Yoshida K."/>
            <person name="Yoshikawa H.-F."/>
            <person name="Zumstein E."/>
            <person name="Yoshikawa H."/>
            <person name="Danchin A."/>
        </authorList>
    </citation>
    <scope>NUCLEOTIDE SEQUENCE [LARGE SCALE GENOMIC DNA]</scope>
    <source>
        <strain>168</strain>
    </source>
</reference>
<reference key="3">
    <citation type="journal article" date="1999" name="Genome Res.">
        <title>Detecting and analyzing DNA sequencing errors: toward a higher quality of the Bacillus subtilis genome sequence.</title>
        <authorList>
            <person name="Medigue C."/>
            <person name="Rose M."/>
            <person name="Viari A."/>
            <person name="Danchin A."/>
        </authorList>
    </citation>
    <scope>SEQUENCE REVISION</scope>
</reference>
<reference key="4">
    <citation type="journal article" date="2000" name="Microbiology">
        <title>Proteome analysis of Bacillus subtilis extracellular proteins: a two-dimensional protein electrophoretic study.</title>
        <authorList>
            <person name="Hirose I."/>
            <person name="Sano K."/>
            <person name="Shioda I."/>
            <person name="Kumano M."/>
            <person name="Nakamura K."/>
            <person name="Yamane K."/>
        </authorList>
    </citation>
    <scope>PROTEIN SEQUENCE OF 42-52</scope>
    <scope>SUBCELLULAR LOCATION</scope>
    <source>
        <strain>168</strain>
    </source>
</reference>
<reference key="5">
    <citation type="journal article" date="2002" name="Mol. Genet. Genomics">
        <title>The beta-propeller protein YxaL increases the processivity of the PcrA helicase.</title>
        <authorList>
            <person name="Noirot-Gros M.-F."/>
            <person name="Soultanas P."/>
            <person name="Wigley D.B."/>
            <person name="Ehrlich S.D."/>
            <person name="Noirot P."/>
            <person name="Petit M.-A."/>
        </authorList>
    </citation>
    <scope>FUNCTION</scope>
    <scope>INTERACTION WITH PCRA; PDP; YCLM; YKVL; YHCQ AND YOML</scope>
    <scope>DISRUPTION PHENOTYPE</scope>
</reference>
<gene>
    <name type="primary">yxaL</name>
    <name type="synonym">yxaK</name>
    <name type="ordered locus">BSU39940</name>
    <name type="ORF">S14K/S14L</name>
</gene>
<comment type="function">
    <text evidence="2">Increases the processivity of the PcrA helicase, but does not bind to DNA.</text>
</comment>
<comment type="subunit">
    <text evidence="2">Interacts with PcrA, Pdp, YclM, YkvL, YhcQ and YomL. The interaction with PcrA is not essential for cell viability or repair of UV-induced lesions.</text>
</comment>
<comment type="subcellular location">
    <subcellularLocation>
        <location evidence="1">Secreted</location>
    </subcellularLocation>
</comment>
<comment type="disruption phenotype">
    <text evidence="2">No PcrA-related phenotype.</text>
</comment>
<comment type="sequence caution" evidence="3">
    <conflict type="frameshift">
        <sequence resource="EMBL-CDS" id="BAA21591"/>
    </conflict>
</comment>
<keyword id="KW-0903">Direct protein sequencing</keyword>
<keyword id="KW-1185">Reference proteome</keyword>
<keyword id="KW-0964">Secreted</keyword>
<keyword id="KW-0732">Signal</keyword>
<protein>
    <recommendedName>
        <fullName>Uncharacterized protein YxaL</fullName>
    </recommendedName>
</protein>
<accession>P42111</accession>
<accession>O32290</accession>
<accession>P42110</accession>
<feature type="signal peptide" evidence="1">
    <location>
        <begin position="1"/>
        <end position="41"/>
    </location>
</feature>
<feature type="chain" id="PRO_0000050002" description="Uncharacterized protein YxaL">
    <location>
        <begin position="42"/>
        <end position="410"/>
    </location>
</feature>
<feature type="sequence conflict" description="In Ref. 1; BAA21591." evidence="3" ref="1">
    <original>YTKLMAFGK</original>
    <variation>SYEADGFWEITE</variation>
    <location>
        <begin position="402"/>
        <end position="410"/>
    </location>
</feature>
<name>YXAL_BACSU</name>
<sequence>MVKSFRMKALIAGAAVAAAVSAGAVSDVPAAKVLQPTAAYAAETVFSQNNGASGFLPGRYDVQAMAPAMFNWSRESRFAGNTDGTLKWQNDIRTTPQNGAGAVIDGDGTVYLHSRDGEMKAFNPDGSVKWVTGNLGKTYTQSPVLGTNGVIYLASYDKKIYFIDKETGEILTTVPLSGGPSSETVIGSDGTLYFSTLDNYVHAIKPTSKSTWTERWKLKTNGVVSSVPVLAKNGTVYVGTYNYVFYAINSGTGQVKWSRTTSNAFKGYPVIDKDGNIYAGNQDGQLYAYTSTGSLKWTFPLNGFSSSSPAIDHNGNIYIGSGSGELFSISKNGDMNWSFYTDGPVRTAPLIDAKGTVYFGSDDMKVYAADANGNELWSYQTDSNVVSSPQLAEDGTLYIGSYTKLMAFGK</sequence>